<name>Y157_AQUAE</name>
<dbReference type="EMBL" id="AE000657">
    <property type="protein sequence ID" value="AAC06512.1"/>
    <property type="molecule type" value="Genomic_DNA"/>
</dbReference>
<dbReference type="PIR" id="H70314">
    <property type="entry name" value="H70314"/>
</dbReference>
<dbReference type="RefSeq" id="NP_213107.1">
    <property type="nucleotide sequence ID" value="NC_000918.1"/>
</dbReference>
<dbReference type="SMR" id="O66547"/>
<dbReference type="FunCoup" id="O66547">
    <property type="interactions" value="140"/>
</dbReference>
<dbReference type="STRING" id="224324.aq_157"/>
<dbReference type="EnsemblBacteria" id="AAC06512">
    <property type="protein sequence ID" value="AAC06512"/>
    <property type="gene ID" value="aq_157"/>
</dbReference>
<dbReference type="KEGG" id="aae:aq_157"/>
<dbReference type="eggNOG" id="COG2825">
    <property type="taxonomic scope" value="Bacteria"/>
</dbReference>
<dbReference type="HOGENOM" id="CLU_101388_3_4_0"/>
<dbReference type="InParanoid" id="O66547"/>
<dbReference type="OrthoDB" id="14484at2"/>
<dbReference type="Proteomes" id="UP000000798">
    <property type="component" value="Chromosome"/>
</dbReference>
<dbReference type="GO" id="GO:0051082">
    <property type="term" value="F:unfolded protein binding"/>
    <property type="evidence" value="ECO:0007669"/>
    <property type="project" value="InterPro"/>
</dbReference>
<dbReference type="GO" id="GO:0061077">
    <property type="term" value="P:chaperone-mediated protein folding"/>
    <property type="evidence" value="ECO:0000318"/>
    <property type="project" value="GO_Central"/>
</dbReference>
<dbReference type="GO" id="GO:0050821">
    <property type="term" value="P:protein stabilization"/>
    <property type="evidence" value="ECO:0000318"/>
    <property type="project" value="GO_Central"/>
</dbReference>
<dbReference type="FunFam" id="3.30.910.20:FF:000007">
    <property type="entry name" value="Cationic outer membrane protein"/>
    <property type="match status" value="1"/>
</dbReference>
<dbReference type="Gene3D" id="3.30.910.20">
    <property type="entry name" value="Skp domain"/>
    <property type="match status" value="1"/>
</dbReference>
<dbReference type="InterPro" id="IPR005632">
    <property type="entry name" value="Chaperone_Skp"/>
</dbReference>
<dbReference type="InterPro" id="IPR024930">
    <property type="entry name" value="Skp_dom_sf"/>
</dbReference>
<dbReference type="PANTHER" id="PTHR35089">
    <property type="entry name" value="CHAPERONE PROTEIN SKP"/>
    <property type="match status" value="1"/>
</dbReference>
<dbReference type="PANTHER" id="PTHR35089:SF1">
    <property type="entry name" value="CHAPERONE PROTEIN SKP"/>
    <property type="match status" value="1"/>
</dbReference>
<dbReference type="Pfam" id="PF03938">
    <property type="entry name" value="OmpH"/>
    <property type="match status" value="1"/>
</dbReference>
<dbReference type="SMART" id="SM00935">
    <property type="entry name" value="OmpH"/>
    <property type="match status" value="1"/>
</dbReference>
<dbReference type="SUPFAM" id="SSF111384">
    <property type="entry name" value="OmpH-like"/>
    <property type="match status" value="1"/>
</dbReference>
<accession>O66547</accession>
<gene>
    <name type="ordered locus">aq_157</name>
</gene>
<organism>
    <name type="scientific">Aquifex aeolicus (strain VF5)</name>
    <dbReference type="NCBI Taxonomy" id="224324"/>
    <lineage>
        <taxon>Bacteria</taxon>
        <taxon>Pseudomonadati</taxon>
        <taxon>Aquificota</taxon>
        <taxon>Aquificia</taxon>
        <taxon>Aquificales</taxon>
        <taxon>Aquificaceae</taxon>
        <taxon>Aquifex</taxon>
    </lineage>
</organism>
<feature type="signal peptide" evidence="1">
    <location>
        <begin position="1"/>
        <end position="21"/>
    </location>
</feature>
<feature type="chain" id="PRO_0000020189" description="Uncharacterized protein aq_157">
    <location>
        <begin position="22"/>
        <end position="162"/>
    </location>
</feature>
<feature type="coiled-coil region" evidence="1">
    <location>
        <begin position="32"/>
        <end position="118"/>
    </location>
</feature>
<evidence type="ECO:0000255" key="1"/>
<evidence type="ECO:0000305" key="2"/>
<comment type="similarity">
    <text evidence="2">Belongs to the Skp family.</text>
</comment>
<reference key="1">
    <citation type="journal article" date="1998" name="Nature">
        <title>The complete genome of the hyperthermophilic bacterium Aquifex aeolicus.</title>
        <authorList>
            <person name="Deckert G."/>
            <person name="Warren P.V."/>
            <person name="Gaasterland T."/>
            <person name="Young W.G."/>
            <person name="Lenox A.L."/>
            <person name="Graham D.E."/>
            <person name="Overbeek R."/>
            <person name="Snead M.A."/>
            <person name="Keller M."/>
            <person name="Aujay M."/>
            <person name="Huber R."/>
            <person name="Feldman R.A."/>
            <person name="Short J.M."/>
            <person name="Olsen G.J."/>
            <person name="Swanson R.V."/>
        </authorList>
    </citation>
    <scope>NUCLEOTIDE SEQUENCE [LARGE SCALE GENOMIC DNA]</scope>
    <source>
        <strain>VF5</strain>
    </source>
</reference>
<protein>
    <recommendedName>
        <fullName>Uncharacterized protein aq_157</fullName>
    </recommendedName>
</protein>
<keyword id="KW-0175">Coiled coil</keyword>
<keyword id="KW-1185">Reference proteome</keyword>
<keyword id="KW-0732">Signal</keyword>
<proteinExistence type="inferred from homology"/>
<sequence>MEGIMKKFFALMTLIAGISFSLDFACVDTNKVIRESKFIAKAQTELRKELEKYQKLIQEKQKKLEALKKSLESKALSEKAKEKKAKEIEQLEDELRKLQVEAQSKLSRKKAELEKMVFDKVIKIVESTAKKKKIKAVFDCNSMLYWDKKIDITNEVLKELDK</sequence>